<sequence>MAQDSNNLIWIDMEMTGLNPGTDRIIEVALVVTDAQLNTLAEAPVLVVHQPDDILNGMDKWNQSTHGKSGLIDKVKTSILSEAEVESRMLAFLELHVPAGTSPMCGNSICQDRRFLARSMPKLESYFHYRNLDVSTLKELAKRWKPEITQGFNKQGKHEALADIYDSIEELKYYRQHLFNI</sequence>
<gene>
    <name evidence="1" type="primary">orn</name>
    <name type="ordered locus">NE0075</name>
</gene>
<evidence type="ECO:0000255" key="1">
    <source>
        <dbReference type="HAMAP-Rule" id="MF_00045"/>
    </source>
</evidence>
<reference key="1">
    <citation type="journal article" date="2003" name="J. Bacteriol.">
        <title>Complete genome sequence of the ammonia-oxidizing bacterium and obligate chemolithoautotroph Nitrosomonas europaea.</title>
        <authorList>
            <person name="Chain P."/>
            <person name="Lamerdin J.E."/>
            <person name="Larimer F.W."/>
            <person name="Regala W."/>
            <person name="Lao V."/>
            <person name="Land M.L."/>
            <person name="Hauser L."/>
            <person name="Hooper A.B."/>
            <person name="Klotz M.G."/>
            <person name="Norton J."/>
            <person name="Sayavedra-Soto L.A."/>
            <person name="Arciero D.M."/>
            <person name="Hommes N.G."/>
            <person name="Whittaker M.M."/>
            <person name="Arp D.J."/>
        </authorList>
    </citation>
    <scope>NUCLEOTIDE SEQUENCE [LARGE SCALE GENOMIC DNA]</scope>
    <source>
        <strain>ATCC 19718 / CIP 103999 / KCTC 2705 / NBRC 14298</strain>
    </source>
</reference>
<proteinExistence type="inferred from homology"/>
<organism>
    <name type="scientific">Nitrosomonas europaea (strain ATCC 19718 / CIP 103999 / KCTC 2705 / NBRC 14298)</name>
    <dbReference type="NCBI Taxonomy" id="228410"/>
    <lineage>
        <taxon>Bacteria</taxon>
        <taxon>Pseudomonadati</taxon>
        <taxon>Pseudomonadota</taxon>
        <taxon>Betaproteobacteria</taxon>
        <taxon>Nitrosomonadales</taxon>
        <taxon>Nitrosomonadaceae</taxon>
        <taxon>Nitrosomonas</taxon>
    </lineage>
</organism>
<dbReference type="EC" id="3.1.15.-" evidence="1"/>
<dbReference type="EMBL" id="AL954747">
    <property type="protein sequence ID" value="CAD83986.1"/>
    <property type="molecule type" value="Genomic_DNA"/>
</dbReference>
<dbReference type="RefSeq" id="WP_011110727.1">
    <property type="nucleotide sequence ID" value="NC_004757.1"/>
</dbReference>
<dbReference type="SMR" id="Q82Y15"/>
<dbReference type="STRING" id="228410.NE0075"/>
<dbReference type="GeneID" id="87103289"/>
<dbReference type="KEGG" id="neu:NE0075"/>
<dbReference type="eggNOG" id="COG1949">
    <property type="taxonomic scope" value="Bacteria"/>
</dbReference>
<dbReference type="HOGENOM" id="CLU_064761_2_0_4"/>
<dbReference type="OrthoDB" id="9801329at2"/>
<dbReference type="PhylomeDB" id="Q82Y15"/>
<dbReference type="Proteomes" id="UP000001416">
    <property type="component" value="Chromosome"/>
</dbReference>
<dbReference type="GO" id="GO:0005737">
    <property type="term" value="C:cytoplasm"/>
    <property type="evidence" value="ECO:0007669"/>
    <property type="project" value="UniProtKB-SubCell"/>
</dbReference>
<dbReference type="GO" id="GO:0000175">
    <property type="term" value="F:3'-5'-RNA exonuclease activity"/>
    <property type="evidence" value="ECO:0007669"/>
    <property type="project" value="InterPro"/>
</dbReference>
<dbReference type="GO" id="GO:0003676">
    <property type="term" value="F:nucleic acid binding"/>
    <property type="evidence" value="ECO:0007669"/>
    <property type="project" value="InterPro"/>
</dbReference>
<dbReference type="GO" id="GO:0006259">
    <property type="term" value="P:DNA metabolic process"/>
    <property type="evidence" value="ECO:0007669"/>
    <property type="project" value="UniProtKB-ARBA"/>
</dbReference>
<dbReference type="CDD" id="cd06135">
    <property type="entry name" value="Orn"/>
    <property type="match status" value="1"/>
</dbReference>
<dbReference type="FunFam" id="3.30.420.10:FF:000003">
    <property type="entry name" value="Oligoribonuclease"/>
    <property type="match status" value="1"/>
</dbReference>
<dbReference type="Gene3D" id="3.30.420.10">
    <property type="entry name" value="Ribonuclease H-like superfamily/Ribonuclease H"/>
    <property type="match status" value="1"/>
</dbReference>
<dbReference type="HAMAP" id="MF_00045">
    <property type="entry name" value="Oligoribonuclease"/>
    <property type="match status" value="1"/>
</dbReference>
<dbReference type="InterPro" id="IPR013520">
    <property type="entry name" value="Exonuclease_RNaseT/DNA_pol3"/>
</dbReference>
<dbReference type="InterPro" id="IPR022894">
    <property type="entry name" value="Oligoribonuclease"/>
</dbReference>
<dbReference type="InterPro" id="IPR012337">
    <property type="entry name" value="RNaseH-like_sf"/>
</dbReference>
<dbReference type="InterPro" id="IPR036397">
    <property type="entry name" value="RNaseH_sf"/>
</dbReference>
<dbReference type="NCBIfam" id="NF003765">
    <property type="entry name" value="PRK05359.1"/>
    <property type="match status" value="1"/>
</dbReference>
<dbReference type="PANTHER" id="PTHR11046">
    <property type="entry name" value="OLIGORIBONUCLEASE, MITOCHONDRIAL"/>
    <property type="match status" value="1"/>
</dbReference>
<dbReference type="PANTHER" id="PTHR11046:SF0">
    <property type="entry name" value="OLIGORIBONUCLEASE, MITOCHONDRIAL"/>
    <property type="match status" value="1"/>
</dbReference>
<dbReference type="Pfam" id="PF00929">
    <property type="entry name" value="RNase_T"/>
    <property type="match status" value="1"/>
</dbReference>
<dbReference type="SMART" id="SM00479">
    <property type="entry name" value="EXOIII"/>
    <property type="match status" value="1"/>
</dbReference>
<dbReference type="SUPFAM" id="SSF53098">
    <property type="entry name" value="Ribonuclease H-like"/>
    <property type="match status" value="1"/>
</dbReference>
<comment type="function">
    <text evidence="1">3'-to-5' exoribonuclease specific for small oligoribonucleotides.</text>
</comment>
<comment type="subcellular location">
    <subcellularLocation>
        <location evidence="1">Cytoplasm</location>
    </subcellularLocation>
</comment>
<comment type="similarity">
    <text evidence="1">Belongs to the oligoribonuclease family.</text>
</comment>
<accession>Q82Y15</accession>
<feature type="chain" id="PRO_0000111055" description="Oligoribonuclease">
    <location>
        <begin position="1"/>
        <end position="181"/>
    </location>
</feature>
<feature type="domain" description="Exonuclease" evidence="1">
    <location>
        <begin position="8"/>
        <end position="171"/>
    </location>
</feature>
<feature type="active site" evidence="1">
    <location>
        <position position="129"/>
    </location>
</feature>
<protein>
    <recommendedName>
        <fullName evidence="1">Oligoribonuclease</fullName>
        <ecNumber evidence="1">3.1.15.-</ecNumber>
    </recommendedName>
</protein>
<keyword id="KW-0963">Cytoplasm</keyword>
<keyword id="KW-0269">Exonuclease</keyword>
<keyword id="KW-0378">Hydrolase</keyword>
<keyword id="KW-0540">Nuclease</keyword>
<keyword id="KW-1185">Reference proteome</keyword>
<name>ORN_NITEU</name>